<reference key="1">
    <citation type="journal article" date="1997" name="Nature">
        <title>The nucleotide sequence of Saccharomyces cerevisiae chromosome XVI.</title>
        <authorList>
            <person name="Bussey H."/>
            <person name="Storms R.K."/>
            <person name="Ahmed A."/>
            <person name="Albermann K."/>
            <person name="Allen E."/>
            <person name="Ansorge W."/>
            <person name="Araujo R."/>
            <person name="Aparicio A."/>
            <person name="Barrell B.G."/>
            <person name="Badcock K."/>
            <person name="Benes V."/>
            <person name="Botstein D."/>
            <person name="Bowman S."/>
            <person name="Brueckner M."/>
            <person name="Carpenter J."/>
            <person name="Cherry J.M."/>
            <person name="Chung E."/>
            <person name="Churcher C.M."/>
            <person name="Coster F."/>
            <person name="Davis K."/>
            <person name="Davis R.W."/>
            <person name="Dietrich F.S."/>
            <person name="Delius H."/>
            <person name="DiPaolo T."/>
            <person name="Dubois E."/>
            <person name="Duesterhoeft A."/>
            <person name="Duncan M."/>
            <person name="Floeth M."/>
            <person name="Fortin N."/>
            <person name="Friesen J.D."/>
            <person name="Fritz C."/>
            <person name="Goffeau A."/>
            <person name="Hall J."/>
            <person name="Hebling U."/>
            <person name="Heumann K."/>
            <person name="Hilbert H."/>
            <person name="Hillier L.W."/>
            <person name="Hunicke-Smith S."/>
            <person name="Hyman R.W."/>
            <person name="Johnston M."/>
            <person name="Kalman S."/>
            <person name="Kleine K."/>
            <person name="Komp C."/>
            <person name="Kurdi O."/>
            <person name="Lashkari D."/>
            <person name="Lew H."/>
            <person name="Lin A."/>
            <person name="Lin D."/>
            <person name="Louis E.J."/>
            <person name="Marathe R."/>
            <person name="Messenguy F."/>
            <person name="Mewes H.-W."/>
            <person name="Mirtipati S."/>
            <person name="Moestl D."/>
            <person name="Mueller-Auer S."/>
            <person name="Namath A."/>
            <person name="Nentwich U."/>
            <person name="Oefner P."/>
            <person name="Pearson D."/>
            <person name="Petel F.X."/>
            <person name="Pohl T.M."/>
            <person name="Purnelle B."/>
            <person name="Rajandream M.A."/>
            <person name="Rechmann S."/>
            <person name="Rieger M."/>
            <person name="Riles L."/>
            <person name="Roberts D."/>
            <person name="Schaefer M."/>
            <person name="Scharfe M."/>
            <person name="Scherens B."/>
            <person name="Schramm S."/>
            <person name="Schroeder M."/>
            <person name="Sdicu A.-M."/>
            <person name="Tettelin H."/>
            <person name="Urrestarazu L.A."/>
            <person name="Ushinsky S."/>
            <person name="Vierendeels F."/>
            <person name="Vissers S."/>
            <person name="Voss H."/>
            <person name="Walsh S.V."/>
            <person name="Wambutt R."/>
            <person name="Wang Y."/>
            <person name="Wedler E."/>
            <person name="Wedler H."/>
            <person name="Winnett E."/>
            <person name="Zhong W.-W."/>
            <person name="Zollner A."/>
            <person name="Vo D.H."/>
            <person name="Hani J."/>
        </authorList>
    </citation>
    <scope>NUCLEOTIDE SEQUENCE [LARGE SCALE GENOMIC DNA]</scope>
    <source>
        <strain>ATCC 204508 / S288c</strain>
    </source>
</reference>
<reference key="2">
    <citation type="journal article" date="2014" name="G3 (Bethesda)">
        <title>The reference genome sequence of Saccharomyces cerevisiae: Then and now.</title>
        <authorList>
            <person name="Engel S.R."/>
            <person name="Dietrich F.S."/>
            <person name="Fisk D.G."/>
            <person name="Binkley G."/>
            <person name="Balakrishnan R."/>
            <person name="Costanzo M.C."/>
            <person name="Dwight S.S."/>
            <person name="Hitz B.C."/>
            <person name="Karra K."/>
            <person name="Nash R.S."/>
            <person name="Weng S."/>
            <person name="Wong E.D."/>
            <person name="Lloyd P."/>
            <person name="Skrzypek M.S."/>
            <person name="Miyasato S.R."/>
            <person name="Simison M."/>
            <person name="Cherry J.M."/>
        </authorList>
    </citation>
    <scope>GENOME REANNOTATION</scope>
    <source>
        <strain>ATCC 204508 / S288c</strain>
    </source>
</reference>
<reference key="3">
    <citation type="journal article" date="1996" name="Yeast">
        <title>Molecular genetics of ICL2, encoding a non-functional isocitrate lyase in Saccharomyces cerevisiae.</title>
        <authorList>
            <person name="Heinisch J.J."/>
            <person name="Valdes E."/>
            <person name="Alvarez J."/>
            <person name="Rodicio R."/>
        </authorList>
    </citation>
    <scope>INDUCTION</scope>
</reference>
<reference key="4">
    <citation type="journal article" date="2000" name="J. Bacteriol.">
        <title>The Saccharomyces cerevisiae ICL2 gene encodes a mitochondrial 2-methylisocitrate lyase involved in propionyl-coenzyme A metabolism.</title>
        <authorList>
            <person name="Luttik M.A.H."/>
            <person name="Koetter P."/>
            <person name="Salomons F.A."/>
            <person name="van der Klei I.J."/>
            <person name="van Dijken J.P."/>
            <person name="Pronk J.T."/>
        </authorList>
    </citation>
    <scope>FUNCTION</scope>
    <scope>INDUCTION</scope>
    <scope>SUBCELLULAR LOCATION</scope>
    <scope>CATALYTIC ACTIVITY</scope>
</reference>
<reference key="5">
    <citation type="journal article" date="2003" name="Nature">
        <title>Global analysis of protein localization in budding yeast.</title>
        <authorList>
            <person name="Huh W.-K."/>
            <person name="Falvo J.V."/>
            <person name="Gerke L.C."/>
            <person name="Carroll A.S."/>
            <person name="Howson R.W."/>
            <person name="Weissman J.S."/>
            <person name="O'Shea E.K."/>
        </authorList>
    </citation>
    <scope>SUBCELLULAR LOCATION [LARGE SCALE ANALYSIS]</scope>
</reference>
<reference key="6">
    <citation type="journal article" date="2003" name="Nature">
        <title>Global analysis of protein expression in yeast.</title>
        <authorList>
            <person name="Ghaemmaghami S."/>
            <person name="Huh W.-K."/>
            <person name="Bower K."/>
            <person name="Howson R.W."/>
            <person name="Belle A."/>
            <person name="Dephoure N."/>
            <person name="O'Shea E.K."/>
            <person name="Weissman J.S."/>
        </authorList>
    </citation>
    <scope>LEVEL OF PROTEIN EXPRESSION [LARGE SCALE ANALYSIS]</scope>
</reference>
<reference key="7">
    <citation type="journal article" date="2003" name="Proc. Natl. Acad. Sci. U.S.A.">
        <title>The proteome of Saccharomyces cerevisiae mitochondria.</title>
        <authorList>
            <person name="Sickmann A."/>
            <person name="Reinders J."/>
            <person name="Wagner Y."/>
            <person name="Joppich C."/>
            <person name="Zahedi R.P."/>
            <person name="Meyer H.E."/>
            <person name="Schoenfisch B."/>
            <person name="Perschil I."/>
            <person name="Chacinska A."/>
            <person name="Guiard B."/>
            <person name="Rehling P."/>
            <person name="Pfanner N."/>
            <person name="Meisinger C."/>
        </authorList>
    </citation>
    <scope>SUBCELLULAR LOCATION [LARGE SCALE ANALYSIS]</scope>
    <source>
        <strain>ATCC 76625 / YPH499</strain>
    </source>
</reference>
<organism>
    <name type="scientific">Saccharomyces cerevisiae (strain ATCC 204508 / S288c)</name>
    <name type="common">Baker's yeast</name>
    <dbReference type="NCBI Taxonomy" id="559292"/>
    <lineage>
        <taxon>Eukaryota</taxon>
        <taxon>Fungi</taxon>
        <taxon>Dikarya</taxon>
        <taxon>Ascomycota</taxon>
        <taxon>Saccharomycotina</taxon>
        <taxon>Saccharomycetes</taxon>
        <taxon>Saccharomycetales</taxon>
        <taxon>Saccharomycetaceae</taxon>
        <taxon>Saccharomyces</taxon>
    </lineage>
</organism>
<accession>Q12031</accession>
<accession>D6W417</accession>
<gene>
    <name type="primary">ICL2</name>
    <name type="ordered locus">YPR006C</name>
    <name type="ORF">LPZ6C</name>
    <name type="ORF">YP9723.06C</name>
</gene>
<evidence type="ECO:0000269" key="1">
    <source>
    </source>
</evidence>
<evidence type="ECO:0000269" key="2">
    <source>
    </source>
</evidence>
<evidence type="ECO:0000269" key="3">
    <source>
    </source>
</evidence>
<evidence type="ECO:0000269" key="4">
    <source>
    </source>
</evidence>
<evidence type="ECO:0000269" key="5">
    <source>
    </source>
</evidence>
<evidence type="ECO:0000303" key="6">
    <source>
    </source>
</evidence>
<evidence type="ECO:0000305" key="7"/>
<evidence type="ECO:0000305" key="8">
    <source>
    </source>
</evidence>
<protein>
    <recommendedName>
        <fullName evidence="6">Mitochondrial 2-methylisocitrate lyase ICL2</fullName>
        <shortName>Methylisocitrate lyase</shortName>
        <ecNumber evidence="1">4.1.3.30</ecNumber>
    </recommendedName>
</protein>
<proteinExistence type="evidence at protein level"/>
<sequence length="575" mass="64976">MITMINNKTFNRKTTGTLKKLVLSSDKSLRRSFNGASSTKDFVFSESSKVEEWWESARFKNISRPYSATDVVKHRGSLPANTSIYPSSYQARKLFNLLEENFKNGTPLHTLGVIDPVQMSQLARCRNIKVAYISGWACSSTLVGSTNEVSPDFGDYPYDTVPNQVERIFKAQQLHDRKAFLEASIKGSTPVDYLKPIIADADMGHGGPTTVMKVAKLFAEKGAAGIHLEDQMVGGKRCGHLSGAVLVPTATHLMRLISTRFQWDIMGTENLVIARTDSCNGKLLSSSSDPRDHEFIRGIIRDNVVPWSEKLIEMEDKKIPNSAIADMEKEWYHENELFTFEEALEKQFTASEFESYKEKKEDLMVNKLGRAYLSLREMKLLAQEVTPLKKIIFDWDAPRTKEGYYMFNGCIEAAIRRSLVFAPYSDMIWLETKTPDLEQARSFSRKIHKQLPATKLVYNLSPSFNWSAHGFDDKALKSFVWDLAKEGFTLQLVSLAGLHSDGVSFWELANSFQSDGMKAYVEKVQKREKETNCDIMTHQLWSGAEYVDSLMKVVQNGASSQTLSTSGESFTETQF</sequence>
<keyword id="KW-0456">Lyase</keyword>
<keyword id="KW-0496">Mitochondrion</keyword>
<keyword id="KW-1185">Reference proteome</keyword>
<name>ACEB_YEAST</name>
<dbReference type="EC" id="4.1.3.30" evidence="1"/>
<dbReference type="EMBL" id="Z71255">
    <property type="protein sequence ID" value="CAA95046.1"/>
    <property type="molecule type" value="Genomic_DNA"/>
</dbReference>
<dbReference type="EMBL" id="Z48951">
    <property type="protein sequence ID" value="CAA88784.1"/>
    <property type="molecule type" value="Genomic_DNA"/>
</dbReference>
<dbReference type="EMBL" id="U31900">
    <property type="protein sequence ID" value="AAA97585.1"/>
    <property type="molecule type" value="Genomic_DNA"/>
</dbReference>
<dbReference type="EMBL" id="BK006949">
    <property type="protein sequence ID" value="DAA11433.1"/>
    <property type="molecule type" value="Genomic_DNA"/>
</dbReference>
<dbReference type="PIR" id="S52819">
    <property type="entry name" value="S52819"/>
</dbReference>
<dbReference type="RefSeq" id="NP_015331.1">
    <property type="nucleotide sequence ID" value="NM_001184103.1"/>
</dbReference>
<dbReference type="SMR" id="Q12031"/>
<dbReference type="BioGRID" id="36183">
    <property type="interactions" value="47"/>
</dbReference>
<dbReference type="DIP" id="DIP-4593N"/>
<dbReference type="FunCoup" id="Q12031">
    <property type="interactions" value="177"/>
</dbReference>
<dbReference type="IntAct" id="Q12031">
    <property type="interactions" value="2"/>
</dbReference>
<dbReference type="STRING" id="4932.YPR006C"/>
<dbReference type="iPTMnet" id="Q12031"/>
<dbReference type="PaxDb" id="4932-YPR006C"/>
<dbReference type="PeptideAtlas" id="Q12031"/>
<dbReference type="EnsemblFungi" id="YPR006C_mRNA">
    <property type="protein sequence ID" value="YPR006C"/>
    <property type="gene ID" value="YPR006C"/>
</dbReference>
<dbReference type="GeneID" id="856114"/>
<dbReference type="KEGG" id="sce:YPR006C"/>
<dbReference type="AGR" id="SGD:S000006210"/>
<dbReference type="SGD" id="S000006210">
    <property type="gene designation" value="ICL2"/>
</dbReference>
<dbReference type="VEuPathDB" id="FungiDB:YPR006C"/>
<dbReference type="eggNOG" id="KOG1260">
    <property type="taxonomic scope" value="Eukaryota"/>
</dbReference>
<dbReference type="HOGENOM" id="CLU_019214_2_2_1"/>
<dbReference type="InParanoid" id="Q12031"/>
<dbReference type="OMA" id="TVPHADF"/>
<dbReference type="OrthoDB" id="4078635at2759"/>
<dbReference type="BioCyc" id="YEAST:G3O-34168-MONOMER"/>
<dbReference type="UniPathway" id="UPA00946"/>
<dbReference type="BioGRID-ORCS" id="856114">
    <property type="hits" value="0 hits in 10 CRISPR screens"/>
</dbReference>
<dbReference type="PRO" id="PR:Q12031"/>
<dbReference type="Proteomes" id="UP000002311">
    <property type="component" value="Chromosome XVI"/>
</dbReference>
<dbReference type="RNAct" id="Q12031">
    <property type="molecule type" value="protein"/>
</dbReference>
<dbReference type="GO" id="GO:0005759">
    <property type="term" value="C:mitochondrial matrix"/>
    <property type="evidence" value="ECO:0000314"/>
    <property type="project" value="SGD"/>
</dbReference>
<dbReference type="GO" id="GO:0005739">
    <property type="term" value="C:mitochondrion"/>
    <property type="evidence" value="ECO:0007005"/>
    <property type="project" value="SGD"/>
</dbReference>
<dbReference type="GO" id="GO:0004451">
    <property type="term" value="F:isocitrate lyase activity"/>
    <property type="evidence" value="ECO:0007669"/>
    <property type="project" value="InterPro"/>
</dbReference>
<dbReference type="GO" id="GO:0046421">
    <property type="term" value="F:methylisocitrate lyase activity"/>
    <property type="evidence" value="ECO:0000314"/>
    <property type="project" value="SGD"/>
</dbReference>
<dbReference type="GO" id="GO:0019629">
    <property type="term" value="P:propionate catabolic process, 2-methylcitrate cycle"/>
    <property type="evidence" value="ECO:0000314"/>
    <property type="project" value="SGD"/>
</dbReference>
<dbReference type="CDD" id="cd00377">
    <property type="entry name" value="ICL_PEPM"/>
    <property type="match status" value="1"/>
</dbReference>
<dbReference type="FunFam" id="1.10.10.850:FF:000001">
    <property type="entry name" value="Isocitrate lyase"/>
    <property type="match status" value="1"/>
</dbReference>
<dbReference type="Gene3D" id="1.10.10.850">
    <property type="match status" value="1"/>
</dbReference>
<dbReference type="Gene3D" id="3.20.20.60">
    <property type="entry name" value="Phosphoenolpyruvate-binding domains"/>
    <property type="match status" value="1"/>
</dbReference>
<dbReference type="InterPro" id="IPR039556">
    <property type="entry name" value="ICL/PEPM"/>
</dbReference>
<dbReference type="InterPro" id="IPR006254">
    <property type="entry name" value="Isocitrate_lyase"/>
</dbReference>
<dbReference type="InterPro" id="IPR018523">
    <property type="entry name" value="Isocitrate_lyase_ph_CS"/>
</dbReference>
<dbReference type="InterPro" id="IPR015813">
    <property type="entry name" value="Pyrv/PenolPyrv_kinase-like_dom"/>
</dbReference>
<dbReference type="InterPro" id="IPR040442">
    <property type="entry name" value="Pyrv_kinase-like_dom_sf"/>
</dbReference>
<dbReference type="NCBIfam" id="TIGR01346">
    <property type="entry name" value="isocit_lyase"/>
    <property type="match status" value="1"/>
</dbReference>
<dbReference type="PANTHER" id="PTHR21631">
    <property type="entry name" value="ISOCITRATE LYASE/MALATE SYNTHASE"/>
    <property type="match status" value="1"/>
</dbReference>
<dbReference type="PANTHER" id="PTHR21631:SF13">
    <property type="entry name" value="MITOCHONDRIAL 2-METHYLISOCITRATE LYASE ICL2"/>
    <property type="match status" value="1"/>
</dbReference>
<dbReference type="Pfam" id="PF00463">
    <property type="entry name" value="ICL"/>
    <property type="match status" value="1"/>
</dbReference>
<dbReference type="PIRSF" id="PIRSF001362">
    <property type="entry name" value="Isocit_lyase"/>
    <property type="match status" value="1"/>
</dbReference>
<dbReference type="SUPFAM" id="SSF51621">
    <property type="entry name" value="Phosphoenolpyruvate/pyruvate domain"/>
    <property type="match status" value="1"/>
</dbReference>
<dbReference type="PROSITE" id="PS00161">
    <property type="entry name" value="ISOCITRATE_LYASE"/>
    <property type="match status" value="1"/>
</dbReference>
<feature type="chain" id="PRO_0000068800" description="Mitochondrial 2-methylisocitrate lyase ICL2">
    <location>
        <begin position="1"/>
        <end position="575"/>
    </location>
</feature>
<feature type="active site" evidence="7">
    <location>
        <position position="238"/>
    </location>
</feature>
<comment type="function">
    <text evidence="1">Catalyzes the formation of pyruvate and succinate from 2-methylisocitrate during the metabolism of endogenous propionyl-CoA. Does not act on isocitrate.</text>
</comment>
<comment type="catalytic activity">
    <reaction evidence="1">
        <text>(2S,3R)-3-hydroxybutane-1,2,3-tricarboxylate = pyruvate + succinate</text>
        <dbReference type="Rhea" id="RHEA:16809"/>
        <dbReference type="ChEBI" id="CHEBI:15361"/>
        <dbReference type="ChEBI" id="CHEBI:30031"/>
        <dbReference type="ChEBI" id="CHEBI:57429"/>
        <dbReference type="EC" id="4.1.3.30"/>
    </reaction>
    <physiologicalReaction direction="left-to-right" evidence="8">
        <dbReference type="Rhea" id="RHEA:16810"/>
    </physiologicalReaction>
</comment>
<comment type="pathway">
    <text>Organic acid metabolism; propanoate degradation.</text>
</comment>
<comment type="subcellular location">
    <subcellularLocation>
        <location evidence="1 2 4">Mitochondrion matrix</location>
    </subcellularLocation>
</comment>
<comment type="induction">
    <text evidence="1 5">Repressed by glucose and induced by ethanol and threonine.</text>
</comment>
<comment type="miscellaneous">
    <text evidence="3">Present with 1084 molecules/cell in log phase SD medium.</text>
</comment>
<comment type="similarity">
    <text evidence="7">Belongs to the isocitrate lyase/PEP mutase superfamily. Isocitrate lyase family.</text>
</comment>